<keyword id="KW-0067">ATP-binding</keyword>
<keyword id="KW-0319">Glycerol metabolism</keyword>
<keyword id="KW-0418">Kinase</keyword>
<keyword id="KW-0547">Nucleotide-binding</keyword>
<keyword id="KW-0808">Transferase</keyword>
<comment type="function">
    <text evidence="1">Key enzyme in the regulation of glycerol uptake and metabolism. Catalyzes the phosphorylation of glycerol to yield sn-glycerol 3-phosphate.</text>
</comment>
<comment type="catalytic activity">
    <reaction evidence="1">
        <text>glycerol + ATP = sn-glycerol 3-phosphate + ADP + H(+)</text>
        <dbReference type="Rhea" id="RHEA:21644"/>
        <dbReference type="ChEBI" id="CHEBI:15378"/>
        <dbReference type="ChEBI" id="CHEBI:17754"/>
        <dbReference type="ChEBI" id="CHEBI:30616"/>
        <dbReference type="ChEBI" id="CHEBI:57597"/>
        <dbReference type="ChEBI" id="CHEBI:456216"/>
        <dbReference type="EC" id="2.7.1.30"/>
    </reaction>
</comment>
<comment type="activity regulation">
    <text evidence="1">Inhibited by fructose 1,6-bisphosphate (FBP).</text>
</comment>
<comment type="pathway">
    <text evidence="1">Polyol metabolism; glycerol degradation via glycerol kinase pathway; sn-glycerol 3-phosphate from glycerol: step 1/1.</text>
</comment>
<comment type="similarity">
    <text evidence="1">Belongs to the FGGY kinase family.</text>
</comment>
<evidence type="ECO:0000255" key="1">
    <source>
        <dbReference type="HAMAP-Rule" id="MF_00186"/>
    </source>
</evidence>
<sequence length="499" mass="55364">MTDNLDKNYIIALDQGTTSSRAIIFDRDANVVGTSQREFAQHYPQAGWVEHDPMEIFATQSATMVEALAQAGISHAQVAAIGITNQRETTVVWDKETGRPVYNAIVWQCRRSTEICAQLKRDGHEQYIREATGLVTDPYFSGTKLKWILDNVEGARERAERGELLFGTIDTWLIWKFSGGKVHVTDYTNASRTLMFNIHTLHWDEKLLDILGIPRQMLPEVRPSSEVYGKTKSGIDIAGIAGDQQSALFGQMCVEPGQAKNTYGTGCFLLMNTGDKAVKSSHGLLTTIACGPRGEVAYALEGAVFNGGSTVQWLRDELKIVNDAHDTEYFASKVKDSNGVYLVPAFTGLGAPYWDPYARGALFGLTRGVKVDHIIRAALESIAYQTRDVLDAMQQDCGERLSELRVDGGAVANNFLMQFQADILGTCVERPKMRETTALGAAYLAGLACGFWSGLDELRDKAIIEREFSPQLAEAEKEKLYKGWRKAVDRTRDWEDHDA</sequence>
<name>GLPK_PSEE4</name>
<protein>
    <recommendedName>
        <fullName evidence="1">Glycerol kinase</fullName>
        <ecNumber evidence="1">2.7.1.30</ecNumber>
    </recommendedName>
    <alternativeName>
        <fullName evidence="1">ATP:glycerol 3-phosphotransferase</fullName>
    </alternativeName>
    <alternativeName>
        <fullName evidence="1">Glycerokinase</fullName>
        <shortName evidence="1">GK</shortName>
    </alternativeName>
</protein>
<accession>Q1IE16</accession>
<proteinExistence type="inferred from homology"/>
<gene>
    <name evidence="1" type="primary">glpK</name>
    <name type="ordered locus">PSEEN1197</name>
</gene>
<dbReference type="EC" id="2.7.1.30" evidence="1"/>
<dbReference type="EMBL" id="CT573326">
    <property type="protein sequence ID" value="CAK14092.1"/>
    <property type="molecule type" value="Genomic_DNA"/>
</dbReference>
<dbReference type="RefSeq" id="WP_011532512.1">
    <property type="nucleotide sequence ID" value="NC_008027.1"/>
</dbReference>
<dbReference type="SMR" id="Q1IE16"/>
<dbReference type="STRING" id="384676.PSEEN1197"/>
<dbReference type="GeneID" id="32804479"/>
<dbReference type="KEGG" id="pen:PSEEN1197"/>
<dbReference type="eggNOG" id="COG0554">
    <property type="taxonomic scope" value="Bacteria"/>
</dbReference>
<dbReference type="HOGENOM" id="CLU_009281_2_3_6"/>
<dbReference type="OrthoDB" id="9805576at2"/>
<dbReference type="UniPathway" id="UPA00618">
    <property type="reaction ID" value="UER00672"/>
</dbReference>
<dbReference type="Proteomes" id="UP000000658">
    <property type="component" value="Chromosome"/>
</dbReference>
<dbReference type="GO" id="GO:0005829">
    <property type="term" value="C:cytosol"/>
    <property type="evidence" value="ECO:0007669"/>
    <property type="project" value="TreeGrafter"/>
</dbReference>
<dbReference type="GO" id="GO:0005524">
    <property type="term" value="F:ATP binding"/>
    <property type="evidence" value="ECO:0007669"/>
    <property type="project" value="UniProtKB-UniRule"/>
</dbReference>
<dbReference type="GO" id="GO:0004370">
    <property type="term" value="F:glycerol kinase activity"/>
    <property type="evidence" value="ECO:0000250"/>
    <property type="project" value="UniProtKB"/>
</dbReference>
<dbReference type="GO" id="GO:0019563">
    <property type="term" value="P:glycerol catabolic process"/>
    <property type="evidence" value="ECO:0007669"/>
    <property type="project" value="UniProtKB-UniRule"/>
</dbReference>
<dbReference type="GO" id="GO:0006071">
    <property type="term" value="P:glycerol metabolic process"/>
    <property type="evidence" value="ECO:0000250"/>
    <property type="project" value="UniProtKB"/>
</dbReference>
<dbReference type="GO" id="GO:0006072">
    <property type="term" value="P:glycerol-3-phosphate metabolic process"/>
    <property type="evidence" value="ECO:0007669"/>
    <property type="project" value="InterPro"/>
</dbReference>
<dbReference type="CDD" id="cd07786">
    <property type="entry name" value="FGGY_EcGK_like"/>
    <property type="match status" value="1"/>
</dbReference>
<dbReference type="FunFam" id="3.30.420.40:FF:000007">
    <property type="entry name" value="Glycerol kinase"/>
    <property type="match status" value="1"/>
</dbReference>
<dbReference type="FunFam" id="3.30.420.40:FF:000008">
    <property type="entry name" value="Glycerol kinase"/>
    <property type="match status" value="1"/>
</dbReference>
<dbReference type="Gene3D" id="3.30.420.40">
    <property type="match status" value="2"/>
</dbReference>
<dbReference type="HAMAP" id="MF_00186">
    <property type="entry name" value="Glycerol_kin"/>
    <property type="match status" value="1"/>
</dbReference>
<dbReference type="InterPro" id="IPR043129">
    <property type="entry name" value="ATPase_NBD"/>
</dbReference>
<dbReference type="InterPro" id="IPR000577">
    <property type="entry name" value="Carb_kinase_FGGY"/>
</dbReference>
<dbReference type="InterPro" id="IPR018483">
    <property type="entry name" value="Carb_kinase_FGGY_CS"/>
</dbReference>
<dbReference type="InterPro" id="IPR018485">
    <property type="entry name" value="FGGY_C"/>
</dbReference>
<dbReference type="InterPro" id="IPR018484">
    <property type="entry name" value="FGGY_N"/>
</dbReference>
<dbReference type="InterPro" id="IPR005999">
    <property type="entry name" value="Glycerol_kin"/>
</dbReference>
<dbReference type="NCBIfam" id="TIGR01311">
    <property type="entry name" value="glycerol_kin"/>
    <property type="match status" value="1"/>
</dbReference>
<dbReference type="NCBIfam" id="NF000756">
    <property type="entry name" value="PRK00047.1"/>
    <property type="match status" value="1"/>
</dbReference>
<dbReference type="PANTHER" id="PTHR10196:SF69">
    <property type="entry name" value="GLYCEROL KINASE"/>
    <property type="match status" value="1"/>
</dbReference>
<dbReference type="PANTHER" id="PTHR10196">
    <property type="entry name" value="SUGAR KINASE"/>
    <property type="match status" value="1"/>
</dbReference>
<dbReference type="Pfam" id="PF02782">
    <property type="entry name" value="FGGY_C"/>
    <property type="match status" value="1"/>
</dbReference>
<dbReference type="Pfam" id="PF00370">
    <property type="entry name" value="FGGY_N"/>
    <property type="match status" value="1"/>
</dbReference>
<dbReference type="PIRSF" id="PIRSF000538">
    <property type="entry name" value="GlpK"/>
    <property type="match status" value="1"/>
</dbReference>
<dbReference type="SUPFAM" id="SSF53067">
    <property type="entry name" value="Actin-like ATPase domain"/>
    <property type="match status" value="2"/>
</dbReference>
<dbReference type="PROSITE" id="PS00933">
    <property type="entry name" value="FGGY_KINASES_1"/>
    <property type="match status" value="1"/>
</dbReference>
<dbReference type="PROSITE" id="PS00445">
    <property type="entry name" value="FGGY_KINASES_2"/>
    <property type="match status" value="1"/>
</dbReference>
<reference key="1">
    <citation type="journal article" date="2006" name="Nat. Biotechnol.">
        <title>Complete genome sequence of the entomopathogenic and metabolically versatile soil bacterium Pseudomonas entomophila.</title>
        <authorList>
            <person name="Vodovar N."/>
            <person name="Vallenet D."/>
            <person name="Cruveiller S."/>
            <person name="Rouy Z."/>
            <person name="Barbe V."/>
            <person name="Acosta C."/>
            <person name="Cattolico L."/>
            <person name="Jubin C."/>
            <person name="Lajus A."/>
            <person name="Segurens B."/>
            <person name="Vacherie B."/>
            <person name="Wincker P."/>
            <person name="Weissenbach J."/>
            <person name="Lemaitre B."/>
            <person name="Medigue C."/>
            <person name="Boccard F."/>
        </authorList>
    </citation>
    <scope>NUCLEOTIDE SEQUENCE [LARGE SCALE GENOMIC DNA]</scope>
    <source>
        <strain>L48</strain>
    </source>
</reference>
<organism>
    <name type="scientific">Pseudomonas entomophila (strain L48)</name>
    <dbReference type="NCBI Taxonomy" id="384676"/>
    <lineage>
        <taxon>Bacteria</taxon>
        <taxon>Pseudomonadati</taxon>
        <taxon>Pseudomonadota</taxon>
        <taxon>Gammaproteobacteria</taxon>
        <taxon>Pseudomonadales</taxon>
        <taxon>Pseudomonadaceae</taxon>
        <taxon>Pseudomonas</taxon>
    </lineage>
</organism>
<feature type="chain" id="PRO_1000020758" description="Glycerol kinase">
    <location>
        <begin position="1"/>
        <end position="499"/>
    </location>
</feature>
<feature type="binding site" evidence="1">
    <location>
        <position position="17"/>
    </location>
    <ligand>
        <name>ADP</name>
        <dbReference type="ChEBI" id="CHEBI:456216"/>
    </ligand>
</feature>
<feature type="binding site" evidence="1">
    <location>
        <position position="17"/>
    </location>
    <ligand>
        <name>ATP</name>
        <dbReference type="ChEBI" id="CHEBI:30616"/>
    </ligand>
</feature>
<feature type="binding site" evidence="1">
    <location>
        <position position="17"/>
    </location>
    <ligand>
        <name>sn-glycerol 3-phosphate</name>
        <dbReference type="ChEBI" id="CHEBI:57597"/>
    </ligand>
</feature>
<feature type="binding site" evidence="1">
    <location>
        <position position="18"/>
    </location>
    <ligand>
        <name>ATP</name>
        <dbReference type="ChEBI" id="CHEBI:30616"/>
    </ligand>
</feature>
<feature type="binding site" evidence="1">
    <location>
        <position position="19"/>
    </location>
    <ligand>
        <name>ATP</name>
        <dbReference type="ChEBI" id="CHEBI:30616"/>
    </ligand>
</feature>
<feature type="binding site" evidence="1">
    <location>
        <position position="21"/>
    </location>
    <ligand>
        <name>ADP</name>
        <dbReference type="ChEBI" id="CHEBI:456216"/>
    </ligand>
</feature>
<feature type="binding site" evidence="1">
    <location>
        <position position="87"/>
    </location>
    <ligand>
        <name>glycerol</name>
        <dbReference type="ChEBI" id="CHEBI:17754"/>
    </ligand>
</feature>
<feature type="binding site" evidence="1">
    <location>
        <position position="87"/>
    </location>
    <ligand>
        <name>sn-glycerol 3-phosphate</name>
        <dbReference type="ChEBI" id="CHEBI:57597"/>
    </ligand>
</feature>
<feature type="binding site" evidence="1">
    <location>
        <position position="88"/>
    </location>
    <ligand>
        <name>glycerol</name>
        <dbReference type="ChEBI" id="CHEBI:17754"/>
    </ligand>
</feature>
<feature type="binding site" evidence="1">
    <location>
        <position position="88"/>
    </location>
    <ligand>
        <name>sn-glycerol 3-phosphate</name>
        <dbReference type="ChEBI" id="CHEBI:57597"/>
    </ligand>
</feature>
<feature type="binding site" evidence="1">
    <location>
        <position position="139"/>
    </location>
    <ligand>
        <name>glycerol</name>
        <dbReference type="ChEBI" id="CHEBI:17754"/>
    </ligand>
</feature>
<feature type="binding site" evidence="1">
    <location>
        <position position="139"/>
    </location>
    <ligand>
        <name>sn-glycerol 3-phosphate</name>
        <dbReference type="ChEBI" id="CHEBI:57597"/>
    </ligand>
</feature>
<feature type="binding site" evidence="1">
    <location>
        <position position="243"/>
    </location>
    <ligand>
        <name>glycerol</name>
        <dbReference type="ChEBI" id="CHEBI:17754"/>
    </ligand>
</feature>
<feature type="binding site" evidence="1">
    <location>
        <position position="243"/>
    </location>
    <ligand>
        <name>sn-glycerol 3-phosphate</name>
        <dbReference type="ChEBI" id="CHEBI:57597"/>
    </ligand>
</feature>
<feature type="binding site" evidence="1">
    <location>
        <position position="244"/>
    </location>
    <ligand>
        <name>glycerol</name>
        <dbReference type="ChEBI" id="CHEBI:17754"/>
    </ligand>
</feature>
<feature type="binding site" evidence="1">
    <location>
        <position position="265"/>
    </location>
    <ligand>
        <name>ADP</name>
        <dbReference type="ChEBI" id="CHEBI:456216"/>
    </ligand>
</feature>
<feature type="binding site" evidence="1">
    <location>
        <position position="265"/>
    </location>
    <ligand>
        <name>ATP</name>
        <dbReference type="ChEBI" id="CHEBI:30616"/>
    </ligand>
</feature>
<feature type="binding site" evidence="1">
    <location>
        <position position="308"/>
    </location>
    <ligand>
        <name>ADP</name>
        <dbReference type="ChEBI" id="CHEBI:456216"/>
    </ligand>
</feature>
<feature type="binding site" evidence="1">
    <location>
        <position position="308"/>
    </location>
    <ligand>
        <name>ATP</name>
        <dbReference type="ChEBI" id="CHEBI:30616"/>
    </ligand>
</feature>
<feature type="binding site" evidence="1">
    <location>
        <position position="312"/>
    </location>
    <ligand>
        <name>ATP</name>
        <dbReference type="ChEBI" id="CHEBI:30616"/>
    </ligand>
</feature>
<feature type="binding site" evidence="1">
    <location>
        <position position="409"/>
    </location>
    <ligand>
        <name>ADP</name>
        <dbReference type="ChEBI" id="CHEBI:456216"/>
    </ligand>
</feature>
<feature type="binding site" evidence="1">
    <location>
        <position position="409"/>
    </location>
    <ligand>
        <name>ATP</name>
        <dbReference type="ChEBI" id="CHEBI:30616"/>
    </ligand>
</feature>
<feature type="binding site" evidence="1">
    <location>
        <position position="413"/>
    </location>
    <ligand>
        <name>ADP</name>
        <dbReference type="ChEBI" id="CHEBI:456216"/>
    </ligand>
</feature>